<proteinExistence type="inferred from homology"/>
<evidence type="ECO:0000255" key="1">
    <source>
        <dbReference type="HAMAP-Rule" id="MF_01007"/>
    </source>
</evidence>
<sequence length="322" mass="35472">MRPEAQAGHLPVSQSPAVHLPVLYTQVLEGLRVIENGRYLDGTFGRGGHARGVLTQLGPEGRLLVMDKDPEAIAVAERDFAPDPRVSIFRGSFAQLLQWDATAEGLDGVLFDLGVSSPQLDVAERGFSFGKDGPLDMRMDPDSGESAAQWINRVEDREIADVLWTYGEERQSRRIARAIVARREKQPFSRTAELAELIASVMPRGKDKIHPATRSFQAIRIHINRELADLEAGLDAAVERLKPGGRLAIISFHSLEDRIVKQYMNRLAKAPPANRRLPEAEVFVPTLDLIGGAIKATDEELAANPRARSAVLRVAQKREADA</sequence>
<feature type="chain" id="PRO_0000387143" description="Ribosomal RNA small subunit methyltransferase H">
    <location>
        <begin position="1"/>
        <end position="322"/>
    </location>
</feature>
<feature type="binding site" evidence="1">
    <location>
        <begin position="47"/>
        <end position="49"/>
    </location>
    <ligand>
        <name>S-adenosyl-L-methionine</name>
        <dbReference type="ChEBI" id="CHEBI:59789"/>
    </ligand>
</feature>
<feature type="binding site" evidence="1">
    <location>
        <position position="67"/>
    </location>
    <ligand>
        <name>S-adenosyl-L-methionine</name>
        <dbReference type="ChEBI" id="CHEBI:59789"/>
    </ligand>
</feature>
<feature type="binding site" evidence="1">
    <location>
        <position position="93"/>
    </location>
    <ligand>
        <name>S-adenosyl-L-methionine</name>
        <dbReference type="ChEBI" id="CHEBI:59789"/>
    </ligand>
</feature>
<feature type="binding site" evidence="1">
    <location>
        <position position="112"/>
    </location>
    <ligand>
        <name>S-adenosyl-L-methionine</name>
        <dbReference type="ChEBI" id="CHEBI:59789"/>
    </ligand>
</feature>
<feature type="binding site" evidence="1">
    <location>
        <position position="119"/>
    </location>
    <ligand>
        <name>S-adenosyl-L-methionine</name>
        <dbReference type="ChEBI" id="CHEBI:59789"/>
    </ligand>
</feature>
<accession>B4SJW8</accession>
<comment type="function">
    <text evidence="1">Specifically methylates the N4 position of cytidine in position 1402 (C1402) of 16S rRNA.</text>
</comment>
<comment type="catalytic activity">
    <reaction evidence="1">
        <text>cytidine(1402) in 16S rRNA + S-adenosyl-L-methionine = N(4)-methylcytidine(1402) in 16S rRNA + S-adenosyl-L-homocysteine + H(+)</text>
        <dbReference type="Rhea" id="RHEA:42928"/>
        <dbReference type="Rhea" id="RHEA-COMP:10286"/>
        <dbReference type="Rhea" id="RHEA-COMP:10287"/>
        <dbReference type="ChEBI" id="CHEBI:15378"/>
        <dbReference type="ChEBI" id="CHEBI:57856"/>
        <dbReference type="ChEBI" id="CHEBI:59789"/>
        <dbReference type="ChEBI" id="CHEBI:74506"/>
        <dbReference type="ChEBI" id="CHEBI:82748"/>
        <dbReference type="EC" id="2.1.1.199"/>
    </reaction>
</comment>
<comment type="subcellular location">
    <subcellularLocation>
        <location evidence="1">Cytoplasm</location>
    </subcellularLocation>
</comment>
<comment type="similarity">
    <text evidence="1">Belongs to the methyltransferase superfamily. RsmH family.</text>
</comment>
<organism>
    <name type="scientific">Stenotrophomonas maltophilia (strain R551-3)</name>
    <dbReference type="NCBI Taxonomy" id="391008"/>
    <lineage>
        <taxon>Bacteria</taxon>
        <taxon>Pseudomonadati</taxon>
        <taxon>Pseudomonadota</taxon>
        <taxon>Gammaproteobacteria</taxon>
        <taxon>Lysobacterales</taxon>
        <taxon>Lysobacteraceae</taxon>
        <taxon>Stenotrophomonas</taxon>
        <taxon>Stenotrophomonas maltophilia group</taxon>
    </lineage>
</organism>
<reference key="1">
    <citation type="submission" date="2008-06" db="EMBL/GenBank/DDBJ databases">
        <title>Complete sequence of Stenotrophomonas maltophilia R551-3.</title>
        <authorList>
            <consortium name="US DOE Joint Genome Institute"/>
            <person name="Lucas S."/>
            <person name="Copeland A."/>
            <person name="Lapidus A."/>
            <person name="Glavina del Rio T."/>
            <person name="Dalin E."/>
            <person name="Tice H."/>
            <person name="Pitluck S."/>
            <person name="Chain P."/>
            <person name="Malfatti S."/>
            <person name="Shin M."/>
            <person name="Vergez L."/>
            <person name="Lang D."/>
            <person name="Schmutz J."/>
            <person name="Larimer F."/>
            <person name="Land M."/>
            <person name="Hauser L."/>
            <person name="Kyrpides N."/>
            <person name="Mikhailova N."/>
            <person name="Taghavi S."/>
            <person name="Monchy S."/>
            <person name="Newman L."/>
            <person name="Vangronsveld J."/>
            <person name="van der Lelie D."/>
            <person name="Richardson P."/>
        </authorList>
    </citation>
    <scope>NUCLEOTIDE SEQUENCE [LARGE SCALE GENOMIC DNA]</scope>
    <source>
        <strain>R551-3</strain>
    </source>
</reference>
<dbReference type="EC" id="2.1.1.199" evidence="1"/>
<dbReference type="EMBL" id="CP001111">
    <property type="protein sequence ID" value="ACF50300.1"/>
    <property type="molecule type" value="Genomic_DNA"/>
</dbReference>
<dbReference type="RefSeq" id="WP_012510046.1">
    <property type="nucleotide sequence ID" value="NC_011071.1"/>
</dbReference>
<dbReference type="SMR" id="B4SJW8"/>
<dbReference type="STRING" id="391008.Smal_0595"/>
<dbReference type="KEGG" id="smt:Smal_0595"/>
<dbReference type="eggNOG" id="COG0275">
    <property type="taxonomic scope" value="Bacteria"/>
</dbReference>
<dbReference type="HOGENOM" id="CLU_038422_2_0_6"/>
<dbReference type="OrthoDB" id="9806637at2"/>
<dbReference type="Proteomes" id="UP000001867">
    <property type="component" value="Chromosome"/>
</dbReference>
<dbReference type="GO" id="GO:0005737">
    <property type="term" value="C:cytoplasm"/>
    <property type="evidence" value="ECO:0007669"/>
    <property type="project" value="UniProtKB-SubCell"/>
</dbReference>
<dbReference type="GO" id="GO:0071424">
    <property type="term" value="F:rRNA (cytosine-N4-)-methyltransferase activity"/>
    <property type="evidence" value="ECO:0007669"/>
    <property type="project" value="UniProtKB-UniRule"/>
</dbReference>
<dbReference type="GO" id="GO:0070475">
    <property type="term" value="P:rRNA base methylation"/>
    <property type="evidence" value="ECO:0007669"/>
    <property type="project" value="UniProtKB-UniRule"/>
</dbReference>
<dbReference type="FunFam" id="1.10.150.170:FF:000001">
    <property type="entry name" value="Ribosomal RNA small subunit methyltransferase H"/>
    <property type="match status" value="1"/>
</dbReference>
<dbReference type="Gene3D" id="1.10.150.170">
    <property type="entry name" value="Putative methyltransferase TM0872, insert domain"/>
    <property type="match status" value="1"/>
</dbReference>
<dbReference type="Gene3D" id="3.40.50.150">
    <property type="entry name" value="Vaccinia Virus protein VP39"/>
    <property type="match status" value="1"/>
</dbReference>
<dbReference type="HAMAP" id="MF_01007">
    <property type="entry name" value="16SrRNA_methyltr_H"/>
    <property type="match status" value="1"/>
</dbReference>
<dbReference type="InterPro" id="IPR002903">
    <property type="entry name" value="RsmH"/>
</dbReference>
<dbReference type="InterPro" id="IPR023397">
    <property type="entry name" value="SAM-dep_MeTrfase_MraW_recog"/>
</dbReference>
<dbReference type="InterPro" id="IPR029063">
    <property type="entry name" value="SAM-dependent_MTases_sf"/>
</dbReference>
<dbReference type="NCBIfam" id="TIGR00006">
    <property type="entry name" value="16S rRNA (cytosine(1402)-N(4))-methyltransferase RsmH"/>
    <property type="match status" value="1"/>
</dbReference>
<dbReference type="PANTHER" id="PTHR11265:SF0">
    <property type="entry name" value="12S RRNA N4-METHYLCYTIDINE METHYLTRANSFERASE"/>
    <property type="match status" value="1"/>
</dbReference>
<dbReference type="PANTHER" id="PTHR11265">
    <property type="entry name" value="S-ADENOSYL-METHYLTRANSFERASE MRAW"/>
    <property type="match status" value="1"/>
</dbReference>
<dbReference type="Pfam" id="PF01795">
    <property type="entry name" value="Methyltransf_5"/>
    <property type="match status" value="1"/>
</dbReference>
<dbReference type="PIRSF" id="PIRSF004486">
    <property type="entry name" value="MraW"/>
    <property type="match status" value="1"/>
</dbReference>
<dbReference type="SUPFAM" id="SSF81799">
    <property type="entry name" value="Putative methyltransferase TM0872, insert domain"/>
    <property type="match status" value="1"/>
</dbReference>
<dbReference type="SUPFAM" id="SSF53335">
    <property type="entry name" value="S-adenosyl-L-methionine-dependent methyltransferases"/>
    <property type="match status" value="1"/>
</dbReference>
<keyword id="KW-0963">Cytoplasm</keyword>
<keyword id="KW-0489">Methyltransferase</keyword>
<keyword id="KW-0698">rRNA processing</keyword>
<keyword id="KW-0949">S-adenosyl-L-methionine</keyword>
<keyword id="KW-0808">Transferase</keyword>
<name>RSMH_STRM5</name>
<gene>
    <name evidence="1" type="primary">rsmH</name>
    <name type="synonym">mraW</name>
    <name type="ordered locus">Smal_0595</name>
</gene>
<protein>
    <recommendedName>
        <fullName evidence="1">Ribosomal RNA small subunit methyltransferase H</fullName>
        <ecNumber evidence="1">2.1.1.199</ecNumber>
    </recommendedName>
    <alternativeName>
        <fullName evidence="1">16S rRNA m(4)C1402 methyltransferase</fullName>
    </alternativeName>
    <alternativeName>
        <fullName evidence="1">rRNA (cytosine-N(4)-)-methyltransferase RsmH</fullName>
    </alternativeName>
</protein>